<reference key="1">
    <citation type="journal article" date="1998" name="Science">
        <title>Genome sequence of the nematode C. elegans: a platform for investigating biology.</title>
        <authorList>
            <consortium name="The C. elegans sequencing consortium"/>
        </authorList>
    </citation>
    <scope>NUCLEOTIDE SEQUENCE [LARGE SCALE GENOMIC DNA]</scope>
    <source>
        <strain>Bristol N2</strain>
    </source>
</reference>
<name>SRA20_CAEEL</name>
<gene>
    <name type="primary">sra-20</name>
    <name type="ORF">F28C12.4</name>
</gene>
<proteinExistence type="inferred from homology"/>
<protein>
    <recommendedName>
        <fullName>Serpentine receptor class alpha-20</fullName>
        <shortName>Protein sra-20</shortName>
    </recommendedName>
</protein>
<sequence>MNKTAEELVESLRCASEGLTNALTSITVKVSFVFLATVILLSYYFAVLAIRALWNNNIFSNSTRLILIVCLLNSVVHQSTMMEIRIRQVYRSFVYSSEPCRLPFHFTDCEVELYFYYLTNYFSTYSVFSLTFDRLISYFFPKCYISYPYQVSISLLIIQLVFTLGTYYFGLYGVPKLGYVPICNYAPRLATNFVKINDFRTTIMVFCIIVTIFIYYLNVKSEKQIKRTSYSLGEQYLARENVATSQSVCILIVLQFVCISVSSFGVNYIKSIKSTLSDEEYNKIAPFVVGVTYANLCLPLVIYFKTKLTIRKRRIRIGVMTSVYGDVGEHINRLKKSWE</sequence>
<dbReference type="EMBL" id="Z93380">
    <property type="protein sequence ID" value="CAB07600.1"/>
    <property type="molecule type" value="Genomic_DNA"/>
</dbReference>
<dbReference type="PIR" id="T21476">
    <property type="entry name" value="T21476"/>
</dbReference>
<dbReference type="RefSeq" id="NP_493216.1">
    <property type="nucleotide sequence ID" value="NM_060815.1"/>
</dbReference>
<dbReference type="FunCoup" id="O17844">
    <property type="interactions" value="13"/>
</dbReference>
<dbReference type="PaxDb" id="6239-F28C12.4"/>
<dbReference type="EnsemblMetazoa" id="F28C12.4.1">
    <property type="protein sequence ID" value="F28C12.4.1"/>
    <property type="gene ID" value="WBGene00005046"/>
</dbReference>
<dbReference type="GeneID" id="185056"/>
<dbReference type="KEGG" id="cel:CELE_F28C12.4"/>
<dbReference type="UCSC" id="F28C12.4">
    <property type="organism name" value="c. elegans"/>
</dbReference>
<dbReference type="AGR" id="WB:WBGene00005046"/>
<dbReference type="CTD" id="185056"/>
<dbReference type="WormBase" id="F28C12.4">
    <property type="protein sequence ID" value="CE09751"/>
    <property type="gene ID" value="WBGene00005046"/>
    <property type="gene designation" value="sra-20"/>
</dbReference>
<dbReference type="eggNOG" id="ENOG502THAY">
    <property type="taxonomic scope" value="Eukaryota"/>
</dbReference>
<dbReference type="GeneTree" id="ENSGT00970000195862"/>
<dbReference type="HOGENOM" id="CLU_070413_0_0_1"/>
<dbReference type="InParanoid" id="O17844"/>
<dbReference type="OrthoDB" id="5855692at2759"/>
<dbReference type="PhylomeDB" id="O17844"/>
<dbReference type="PRO" id="PR:O17844"/>
<dbReference type="Proteomes" id="UP000001940">
    <property type="component" value="Chromosome I"/>
</dbReference>
<dbReference type="GO" id="GO:0016020">
    <property type="term" value="C:membrane"/>
    <property type="evidence" value="ECO:0007669"/>
    <property type="project" value="UniProtKB-SubCell"/>
</dbReference>
<dbReference type="GO" id="GO:0004930">
    <property type="term" value="F:G protein-coupled receptor activity"/>
    <property type="evidence" value="ECO:0007669"/>
    <property type="project" value="InterPro"/>
</dbReference>
<dbReference type="GO" id="GO:0007606">
    <property type="term" value="P:sensory perception of chemical stimulus"/>
    <property type="evidence" value="ECO:0007669"/>
    <property type="project" value="InterPro"/>
</dbReference>
<dbReference type="Gene3D" id="1.20.1070.10">
    <property type="entry name" value="Rhodopsin 7-helix transmembrane proteins"/>
    <property type="match status" value="1"/>
</dbReference>
<dbReference type="InterPro" id="IPR000344">
    <property type="entry name" value="7TM_GPCR_serpentine_rcpt_Sra"/>
</dbReference>
<dbReference type="PANTHER" id="PTHR31582:SF2">
    <property type="entry name" value="G-PROTEIN COUPLED RECEPTORS FAMILY 1 PROFILE DOMAIN-CONTAINING PROTEIN-RELATED"/>
    <property type="match status" value="1"/>
</dbReference>
<dbReference type="PANTHER" id="PTHR31582">
    <property type="entry name" value="SERPENTINE RECEPTOR, CLASS A (ALPHA)-RELATED-RELATED"/>
    <property type="match status" value="1"/>
</dbReference>
<dbReference type="Pfam" id="PF02117">
    <property type="entry name" value="7TM_GPCR_Sra"/>
    <property type="match status" value="1"/>
</dbReference>
<dbReference type="PRINTS" id="PR00697">
    <property type="entry name" value="TMPROTEINSRA"/>
</dbReference>
<evidence type="ECO:0000255" key="1"/>
<evidence type="ECO:0000305" key="2"/>
<comment type="subcellular location">
    <subcellularLocation>
        <location evidence="2">Membrane</location>
        <topology evidence="2">Multi-pass membrane protein</topology>
    </subcellularLocation>
</comment>
<comment type="similarity">
    <text evidence="2">Belongs to the nematode receptor-like protein sra family.</text>
</comment>
<keyword id="KW-0472">Membrane</keyword>
<keyword id="KW-1185">Reference proteome</keyword>
<keyword id="KW-0812">Transmembrane</keyword>
<keyword id="KW-1133">Transmembrane helix</keyword>
<feature type="chain" id="PRO_0000104482" description="Serpentine receptor class alpha-20">
    <location>
        <begin position="1"/>
        <end position="339"/>
    </location>
</feature>
<feature type="transmembrane region" description="Helical" evidence="1">
    <location>
        <begin position="30"/>
        <end position="50"/>
    </location>
</feature>
<feature type="transmembrane region" description="Helical" evidence="1">
    <location>
        <begin position="113"/>
        <end position="132"/>
    </location>
</feature>
<feature type="transmembrane region" description="Helical" evidence="1">
    <location>
        <begin position="151"/>
        <end position="171"/>
    </location>
</feature>
<feature type="transmembrane region" description="Helical" evidence="1">
    <location>
        <begin position="199"/>
        <end position="219"/>
    </location>
</feature>
<feature type="transmembrane region" description="Helical" evidence="1">
    <location>
        <begin position="249"/>
        <end position="269"/>
    </location>
</feature>
<feature type="transmembrane region" description="Helical" evidence="1">
    <location>
        <begin position="284"/>
        <end position="304"/>
    </location>
</feature>
<accession>O17844</accession>
<organism>
    <name type="scientific">Caenorhabditis elegans</name>
    <dbReference type="NCBI Taxonomy" id="6239"/>
    <lineage>
        <taxon>Eukaryota</taxon>
        <taxon>Metazoa</taxon>
        <taxon>Ecdysozoa</taxon>
        <taxon>Nematoda</taxon>
        <taxon>Chromadorea</taxon>
        <taxon>Rhabditida</taxon>
        <taxon>Rhabditina</taxon>
        <taxon>Rhabditomorpha</taxon>
        <taxon>Rhabditoidea</taxon>
        <taxon>Rhabditidae</taxon>
        <taxon>Peloderinae</taxon>
        <taxon>Caenorhabditis</taxon>
    </lineage>
</organism>